<protein>
    <recommendedName>
        <fullName>Uncharacterized protein slr1261</fullName>
    </recommendedName>
</protein>
<feature type="chain" id="PRO_0000157886" description="Uncharacterized protein slr1261">
    <location>
        <begin position="1"/>
        <end position="179"/>
    </location>
</feature>
<feature type="transmembrane region" description="Helical" evidence="1">
    <location>
        <begin position="115"/>
        <end position="135"/>
    </location>
</feature>
<feature type="transmembrane region" description="Helical" evidence="1">
    <location>
        <begin position="138"/>
        <end position="158"/>
    </location>
</feature>
<feature type="domain" description="Rhodanese" evidence="2">
    <location>
        <begin position="21"/>
        <end position="109"/>
    </location>
</feature>
<dbReference type="EMBL" id="BA000022">
    <property type="protein sequence ID" value="BAA17855.1"/>
    <property type="molecule type" value="Genomic_DNA"/>
</dbReference>
<dbReference type="PIR" id="S74894">
    <property type="entry name" value="S74894"/>
</dbReference>
<dbReference type="SMR" id="P73801"/>
<dbReference type="STRING" id="1148.gene:10498724"/>
<dbReference type="PaxDb" id="1148-1652937"/>
<dbReference type="EnsemblBacteria" id="BAA17855">
    <property type="protein sequence ID" value="BAA17855"/>
    <property type="gene ID" value="BAA17855"/>
</dbReference>
<dbReference type="KEGG" id="syn:slr1261"/>
<dbReference type="eggNOG" id="COG0607">
    <property type="taxonomic scope" value="Bacteria"/>
</dbReference>
<dbReference type="InParanoid" id="P73801"/>
<dbReference type="PhylomeDB" id="P73801"/>
<dbReference type="Proteomes" id="UP000001425">
    <property type="component" value="Chromosome"/>
</dbReference>
<dbReference type="GO" id="GO:0005886">
    <property type="term" value="C:plasma membrane"/>
    <property type="evidence" value="ECO:0007669"/>
    <property type="project" value="UniProtKB-SubCell"/>
</dbReference>
<dbReference type="CDD" id="cd00158">
    <property type="entry name" value="RHOD"/>
    <property type="match status" value="1"/>
</dbReference>
<dbReference type="Gene3D" id="6.10.140.1340">
    <property type="match status" value="1"/>
</dbReference>
<dbReference type="Gene3D" id="3.40.250.10">
    <property type="entry name" value="Rhodanese-like domain"/>
    <property type="match status" value="1"/>
</dbReference>
<dbReference type="InterPro" id="IPR001763">
    <property type="entry name" value="Rhodanese-like_dom"/>
</dbReference>
<dbReference type="InterPro" id="IPR036873">
    <property type="entry name" value="Rhodanese-like_dom_sf"/>
</dbReference>
<dbReference type="InterPro" id="IPR052367">
    <property type="entry name" value="Thiosulfate_ST/Rhodanese-like"/>
</dbReference>
<dbReference type="InterPro" id="IPR021309">
    <property type="entry name" value="YgaP-like_TM"/>
</dbReference>
<dbReference type="PANTHER" id="PTHR45431">
    <property type="entry name" value="RHODANESE-LIKE DOMAIN-CONTAINING PROTEIN 15, CHLOROPLASTIC"/>
    <property type="match status" value="1"/>
</dbReference>
<dbReference type="PANTHER" id="PTHR45431:SF3">
    <property type="entry name" value="RHODANESE-LIKE DOMAIN-CONTAINING PROTEIN 15, CHLOROPLASTIC"/>
    <property type="match status" value="1"/>
</dbReference>
<dbReference type="Pfam" id="PF00581">
    <property type="entry name" value="Rhodanese"/>
    <property type="match status" value="1"/>
</dbReference>
<dbReference type="Pfam" id="PF11127">
    <property type="entry name" value="YgaP-like_TM"/>
    <property type="match status" value="1"/>
</dbReference>
<dbReference type="SMART" id="SM00450">
    <property type="entry name" value="RHOD"/>
    <property type="match status" value="1"/>
</dbReference>
<dbReference type="SUPFAM" id="SSF52821">
    <property type="entry name" value="Rhodanese/Cell cycle control phosphatase"/>
    <property type="match status" value="1"/>
</dbReference>
<dbReference type="PROSITE" id="PS50206">
    <property type="entry name" value="RHODANESE_3"/>
    <property type="match status" value="1"/>
</dbReference>
<comment type="subcellular location">
    <subcellularLocation>
        <location evidence="3">Cell membrane</location>
        <topology evidence="3">Multi-pass membrane protein</topology>
    </subcellularLocation>
</comment>
<gene>
    <name type="ordered locus">slr1261</name>
</gene>
<evidence type="ECO:0000255" key="1"/>
<evidence type="ECO:0000255" key="2">
    <source>
        <dbReference type="PROSITE-ProRule" id="PRU00173"/>
    </source>
</evidence>
<evidence type="ECO:0000305" key="3"/>
<name>Y1261_SYNY3</name>
<accession>P73801</accession>
<reference key="1">
    <citation type="journal article" date="1996" name="DNA Res.">
        <title>Sequence analysis of the genome of the unicellular cyanobacterium Synechocystis sp. strain PCC6803. II. Sequence determination of the entire genome and assignment of potential protein-coding regions.</title>
        <authorList>
            <person name="Kaneko T."/>
            <person name="Sato S."/>
            <person name="Kotani H."/>
            <person name="Tanaka A."/>
            <person name="Asamizu E."/>
            <person name="Nakamura Y."/>
            <person name="Miyajima N."/>
            <person name="Hirosawa M."/>
            <person name="Sugiura M."/>
            <person name="Sasamoto S."/>
            <person name="Kimura T."/>
            <person name="Hosouchi T."/>
            <person name="Matsuno A."/>
            <person name="Muraki A."/>
            <person name="Nakazaki N."/>
            <person name="Naruo K."/>
            <person name="Okumura S."/>
            <person name="Shimpo S."/>
            <person name="Takeuchi C."/>
            <person name="Wada T."/>
            <person name="Watanabe A."/>
            <person name="Yamada M."/>
            <person name="Yasuda M."/>
            <person name="Tabata S."/>
        </authorList>
    </citation>
    <scope>NUCLEOTIDE SEQUENCE [LARGE SCALE GENOMIC DNA]</scope>
    <source>
        <strain>ATCC 27184 / PCC 6803 / Kazusa</strain>
    </source>
</reference>
<keyword id="KW-1003">Cell membrane</keyword>
<keyword id="KW-0472">Membrane</keyword>
<keyword id="KW-1185">Reference proteome</keyword>
<keyword id="KW-0812">Transmembrane</keyword>
<keyword id="KW-1133">Transmembrane helix</keyword>
<organism>
    <name type="scientific">Synechocystis sp. (strain ATCC 27184 / PCC 6803 / Kazusa)</name>
    <dbReference type="NCBI Taxonomy" id="1111708"/>
    <lineage>
        <taxon>Bacteria</taxon>
        <taxon>Bacillati</taxon>
        <taxon>Cyanobacteriota</taxon>
        <taxon>Cyanophyceae</taxon>
        <taxon>Synechococcales</taxon>
        <taxon>Merismopediaceae</taxon>
        <taxon>Synechocystis</taxon>
    </lineage>
</organism>
<sequence>MASSTQTNVTIAPKTLQQLRQQDAVILVDVREPLEFVGEHITDAYSLPLSRLNPSQLPQAEGKTTVLYCQSSNRSGNALQQLRSAGVEGIIHLEGGLLAWKQAGLPTVKTKNAPISIMRQVQIIAGSLVLTGVLLGSFVAPGFYFLSGFVGAGLLFAGLSGTCMMANLLGKLPYNQIKD</sequence>
<proteinExistence type="predicted"/>